<protein>
    <recommendedName>
        <fullName evidence="1">Ribosome-binding factor A</fullName>
    </recommendedName>
</protein>
<reference key="1">
    <citation type="journal article" date="2003" name="Proc. Natl. Acad. Sci. U.S.A.">
        <title>Complete genome sequence of the marine planctomycete Pirellula sp. strain 1.</title>
        <authorList>
            <person name="Gloeckner F.O."/>
            <person name="Kube M."/>
            <person name="Bauer M."/>
            <person name="Teeling H."/>
            <person name="Lombardot T."/>
            <person name="Ludwig W."/>
            <person name="Gade D."/>
            <person name="Beck A."/>
            <person name="Borzym K."/>
            <person name="Heitmann K."/>
            <person name="Rabus R."/>
            <person name="Schlesner H."/>
            <person name="Amann R."/>
            <person name="Reinhardt R."/>
        </authorList>
    </citation>
    <scope>NUCLEOTIDE SEQUENCE [LARGE SCALE GENOMIC DNA]</scope>
    <source>
        <strain>DSM 10527 / NCIMB 13988 / SH1</strain>
    </source>
</reference>
<sequence length="137" mass="15271">MSSRRLLKAAEAIREVVANAIVTEVRDPRVRDVTVIGVEVSPDMREAKVKVSVMGDETQKNLSLRGLQNSAGFLQSKIANRMDTRYTPKLRFEVDRGQENAMTVSEILARIQQEKEGATDDRDQNDSGEDATPHSND</sequence>
<feature type="chain" id="PRO_0000102719" description="Ribosome-binding factor A">
    <location>
        <begin position="1"/>
        <end position="137"/>
    </location>
</feature>
<feature type="region of interest" description="Disordered" evidence="2">
    <location>
        <begin position="110"/>
        <end position="137"/>
    </location>
</feature>
<feature type="compositionally biased region" description="Basic and acidic residues" evidence="2">
    <location>
        <begin position="112"/>
        <end position="125"/>
    </location>
</feature>
<comment type="function">
    <text evidence="1">One of several proteins that assist in the late maturation steps of the functional core of the 30S ribosomal subunit. Associates with free 30S ribosomal subunits (but not with 30S subunits that are part of 70S ribosomes or polysomes). Required for efficient processing of 16S rRNA. May interact with the 5'-terminal helix region of 16S rRNA.</text>
</comment>
<comment type="subunit">
    <text evidence="1">Monomer. Binds 30S ribosomal subunits, but not 50S ribosomal subunits or 70S ribosomes.</text>
</comment>
<comment type="subcellular location">
    <subcellularLocation>
        <location evidence="1">Cytoplasm</location>
    </subcellularLocation>
</comment>
<comment type="similarity">
    <text evidence="1">Belongs to the RbfA family.</text>
</comment>
<dbReference type="EMBL" id="BX294142">
    <property type="protein sequence ID" value="CAD74277.1"/>
    <property type="molecule type" value="Genomic_DNA"/>
</dbReference>
<dbReference type="RefSeq" id="NP_866737.1">
    <property type="nucleotide sequence ID" value="NC_005027.1"/>
</dbReference>
<dbReference type="RefSeq" id="WP_007325039.1">
    <property type="nucleotide sequence ID" value="NC_005027.1"/>
</dbReference>
<dbReference type="SMR" id="Q7URR1"/>
<dbReference type="FunCoup" id="Q7URR1">
    <property type="interactions" value="420"/>
</dbReference>
<dbReference type="STRING" id="243090.RB5503"/>
<dbReference type="EnsemblBacteria" id="CAD74277">
    <property type="protein sequence ID" value="CAD74277"/>
    <property type="gene ID" value="RB5503"/>
</dbReference>
<dbReference type="KEGG" id="rba:RB5503"/>
<dbReference type="PATRIC" id="fig|243090.15.peg.2645"/>
<dbReference type="eggNOG" id="COG0858">
    <property type="taxonomic scope" value="Bacteria"/>
</dbReference>
<dbReference type="HOGENOM" id="CLU_089475_6_0_0"/>
<dbReference type="InParanoid" id="Q7URR1"/>
<dbReference type="OrthoDB" id="307788at2"/>
<dbReference type="Proteomes" id="UP000001025">
    <property type="component" value="Chromosome"/>
</dbReference>
<dbReference type="GO" id="GO:0005829">
    <property type="term" value="C:cytosol"/>
    <property type="evidence" value="ECO:0000318"/>
    <property type="project" value="GO_Central"/>
</dbReference>
<dbReference type="GO" id="GO:0043024">
    <property type="term" value="F:ribosomal small subunit binding"/>
    <property type="evidence" value="ECO:0000318"/>
    <property type="project" value="GO_Central"/>
</dbReference>
<dbReference type="GO" id="GO:0030490">
    <property type="term" value="P:maturation of SSU-rRNA"/>
    <property type="evidence" value="ECO:0007669"/>
    <property type="project" value="UniProtKB-UniRule"/>
</dbReference>
<dbReference type="GO" id="GO:0042254">
    <property type="term" value="P:ribosome biogenesis"/>
    <property type="evidence" value="ECO:0000318"/>
    <property type="project" value="GO_Central"/>
</dbReference>
<dbReference type="FunFam" id="3.30.300.20:FF:000045">
    <property type="entry name" value="Ribosome-binding factor A"/>
    <property type="match status" value="1"/>
</dbReference>
<dbReference type="Gene3D" id="3.30.300.20">
    <property type="match status" value="1"/>
</dbReference>
<dbReference type="HAMAP" id="MF_00003">
    <property type="entry name" value="RbfA"/>
    <property type="match status" value="1"/>
</dbReference>
<dbReference type="InterPro" id="IPR015946">
    <property type="entry name" value="KH_dom-like_a/b"/>
</dbReference>
<dbReference type="InterPro" id="IPR000238">
    <property type="entry name" value="RbfA"/>
</dbReference>
<dbReference type="InterPro" id="IPR023799">
    <property type="entry name" value="RbfA_dom_sf"/>
</dbReference>
<dbReference type="NCBIfam" id="TIGR00082">
    <property type="entry name" value="rbfA"/>
    <property type="match status" value="1"/>
</dbReference>
<dbReference type="PANTHER" id="PTHR33515">
    <property type="entry name" value="RIBOSOME-BINDING FACTOR A, CHLOROPLASTIC-RELATED"/>
    <property type="match status" value="1"/>
</dbReference>
<dbReference type="PANTHER" id="PTHR33515:SF1">
    <property type="entry name" value="RIBOSOME-BINDING FACTOR A, CHLOROPLASTIC-RELATED"/>
    <property type="match status" value="1"/>
</dbReference>
<dbReference type="Pfam" id="PF02033">
    <property type="entry name" value="RBFA"/>
    <property type="match status" value="1"/>
</dbReference>
<dbReference type="SUPFAM" id="SSF89919">
    <property type="entry name" value="Ribosome-binding factor A, RbfA"/>
    <property type="match status" value="1"/>
</dbReference>
<name>RBFA_RHOBA</name>
<proteinExistence type="inferred from homology"/>
<keyword id="KW-0963">Cytoplasm</keyword>
<keyword id="KW-1185">Reference proteome</keyword>
<keyword id="KW-0690">Ribosome biogenesis</keyword>
<gene>
    <name evidence="1" type="primary">rbfA</name>
    <name type="ordered locus">RB5503</name>
</gene>
<evidence type="ECO:0000255" key="1">
    <source>
        <dbReference type="HAMAP-Rule" id="MF_00003"/>
    </source>
</evidence>
<evidence type="ECO:0000256" key="2">
    <source>
        <dbReference type="SAM" id="MobiDB-lite"/>
    </source>
</evidence>
<organism>
    <name type="scientific">Rhodopirellula baltica (strain DSM 10527 / NCIMB 13988 / SH1)</name>
    <dbReference type="NCBI Taxonomy" id="243090"/>
    <lineage>
        <taxon>Bacteria</taxon>
        <taxon>Pseudomonadati</taxon>
        <taxon>Planctomycetota</taxon>
        <taxon>Planctomycetia</taxon>
        <taxon>Pirellulales</taxon>
        <taxon>Pirellulaceae</taxon>
        <taxon>Rhodopirellula</taxon>
    </lineage>
</organism>
<accession>Q7URR1</accession>